<keyword id="KW-0066">ATP synthesis</keyword>
<keyword id="KW-0067">ATP-binding</keyword>
<keyword id="KW-1003">Cell membrane</keyword>
<keyword id="KW-0139">CF(1)</keyword>
<keyword id="KW-0375">Hydrogen ion transport</keyword>
<keyword id="KW-0406">Ion transport</keyword>
<keyword id="KW-0472">Membrane</keyword>
<keyword id="KW-0547">Nucleotide-binding</keyword>
<keyword id="KW-1185">Reference proteome</keyword>
<keyword id="KW-1278">Translocase</keyword>
<keyword id="KW-0813">Transport</keyword>
<evidence type="ECO:0000255" key="1">
    <source>
        <dbReference type="HAMAP-Rule" id="MF_01347"/>
    </source>
</evidence>
<evidence type="ECO:0000256" key="2">
    <source>
        <dbReference type="SAM" id="MobiDB-lite"/>
    </source>
</evidence>
<accession>P63678</accession>
<accession>A0A1R3XYB8</accession>
<accession>Q10593</accession>
<accession>X2BHI4</accession>
<feature type="chain" id="PRO_0000144456" description="ATP synthase subunit beta">
    <location>
        <begin position="1"/>
        <end position="486"/>
    </location>
</feature>
<feature type="region of interest" description="Disordered" evidence="2">
    <location>
        <begin position="1"/>
        <end position="22"/>
    </location>
</feature>
<feature type="compositionally biased region" description="Basic and acidic residues" evidence="2">
    <location>
        <begin position="1"/>
        <end position="12"/>
    </location>
</feature>
<feature type="binding site" evidence="1">
    <location>
        <begin position="171"/>
        <end position="178"/>
    </location>
    <ligand>
        <name>ATP</name>
        <dbReference type="ChEBI" id="CHEBI:30616"/>
    </ligand>
</feature>
<protein>
    <recommendedName>
        <fullName evidence="1">ATP synthase subunit beta</fullName>
        <ecNumber evidence="1">7.1.2.2</ecNumber>
    </recommendedName>
    <alternativeName>
        <fullName evidence="1">ATP synthase F1 sector subunit beta</fullName>
    </alternativeName>
    <alternativeName>
        <fullName evidence="1">F-ATPase subunit beta</fullName>
    </alternativeName>
</protein>
<gene>
    <name evidence="1" type="primary">atpD</name>
    <name type="ordered locus">BQ2027_MB1342</name>
</gene>
<comment type="function">
    <text evidence="1">Produces ATP from ADP in the presence of a proton gradient across the membrane. The catalytic sites are hosted primarily by the beta subunits.</text>
</comment>
<comment type="catalytic activity">
    <reaction evidence="1">
        <text>ATP + H2O + 4 H(+)(in) = ADP + phosphate + 5 H(+)(out)</text>
        <dbReference type="Rhea" id="RHEA:57720"/>
        <dbReference type="ChEBI" id="CHEBI:15377"/>
        <dbReference type="ChEBI" id="CHEBI:15378"/>
        <dbReference type="ChEBI" id="CHEBI:30616"/>
        <dbReference type="ChEBI" id="CHEBI:43474"/>
        <dbReference type="ChEBI" id="CHEBI:456216"/>
        <dbReference type="EC" id="7.1.2.2"/>
    </reaction>
</comment>
<comment type="subunit">
    <text evidence="1">F-type ATPases have 2 components, CF(1) - the catalytic core - and CF(0) - the membrane proton channel. CF(1) has five subunits: alpha(3), beta(3), gamma(1), delta(1), epsilon(1). CF(0) has three main subunits: a(1), b(2) and c(9-12). The alpha and beta chains form an alternating ring which encloses part of the gamma chain. CF(1) is attached to CF(0) by a central stalk formed by the gamma and epsilon chains, while a peripheral stalk is formed by the delta and b chains.</text>
</comment>
<comment type="subcellular location">
    <subcellularLocation>
        <location evidence="1">Cell membrane</location>
        <topology evidence="1">Peripheral membrane protein</topology>
    </subcellularLocation>
</comment>
<comment type="similarity">
    <text evidence="1">Belongs to the ATPase alpha/beta chains family.</text>
</comment>
<reference key="1">
    <citation type="journal article" date="2003" name="Proc. Natl. Acad. Sci. U.S.A.">
        <title>The complete genome sequence of Mycobacterium bovis.</title>
        <authorList>
            <person name="Garnier T."/>
            <person name="Eiglmeier K."/>
            <person name="Camus J.-C."/>
            <person name="Medina N."/>
            <person name="Mansoor H."/>
            <person name="Pryor M."/>
            <person name="Duthoy S."/>
            <person name="Grondin S."/>
            <person name="Lacroix C."/>
            <person name="Monsempe C."/>
            <person name="Simon S."/>
            <person name="Harris B."/>
            <person name="Atkin R."/>
            <person name="Doggett J."/>
            <person name="Mayes R."/>
            <person name="Keating L."/>
            <person name="Wheeler P.R."/>
            <person name="Parkhill J."/>
            <person name="Barrell B.G."/>
            <person name="Cole S.T."/>
            <person name="Gordon S.V."/>
            <person name="Hewinson R.G."/>
        </authorList>
    </citation>
    <scope>NUCLEOTIDE SEQUENCE [LARGE SCALE GENOMIC DNA]</scope>
    <source>
        <strain>ATCC BAA-935 / AF2122/97</strain>
    </source>
</reference>
<reference key="2">
    <citation type="journal article" date="2017" name="Genome Announc.">
        <title>Updated reference genome sequence and annotation of Mycobacterium bovis AF2122/97.</title>
        <authorList>
            <person name="Malone K.M."/>
            <person name="Farrell D."/>
            <person name="Stuber T.P."/>
            <person name="Schubert O.T."/>
            <person name="Aebersold R."/>
            <person name="Robbe-Austerman S."/>
            <person name="Gordon S.V."/>
        </authorList>
    </citation>
    <scope>NUCLEOTIDE SEQUENCE [LARGE SCALE GENOMIC DNA]</scope>
    <scope>GENOME REANNOTATION</scope>
    <source>
        <strain>ATCC BAA-935 / AF2122/97</strain>
    </source>
</reference>
<name>ATPB_MYCBO</name>
<dbReference type="EC" id="7.1.2.2" evidence="1"/>
<dbReference type="EMBL" id="LT708304">
    <property type="protein sequence ID" value="SIT99945.1"/>
    <property type="molecule type" value="Genomic_DNA"/>
</dbReference>
<dbReference type="RefSeq" id="NP_854996.1">
    <property type="nucleotide sequence ID" value="NC_002945.3"/>
</dbReference>
<dbReference type="RefSeq" id="WP_003406701.1">
    <property type="nucleotide sequence ID" value="NC_002945.4"/>
</dbReference>
<dbReference type="SMR" id="P63678"/>
<dbReference type="GeneID" id="45425284"/>
<dbReference type="KEGG" id="mbo:BQ2027_MB1342"/>
<dbReference type="PATRIC" id="fig|233413.5.peg.1471"/>
<dbReference type="Proteomes" id="UP000001419">
    <property type="component" value="Chromosome"/>
</dbReference>
<dbReference type="GO" id="GO:0005886">
    <property type="term" value="C:plasma membrane"/>
    <property type="evidence" value="ECO:0007669"/>
    <property type="project" value="UniProtKB-SubCell"/>
</dbReference>
<dbReference type="GO" id="GO:0045259">
    <property type="term" value="C:proton-transporting ATP synthase complex"/>
    <property type="evidence" value="ECO:0007669"/>
    <property type="project" value="UniProtKB-KW"/>
</dbReference>
<dbReference type="GO" id="GO:0005524">
    <property type="term" value="F:ATP binding"/>
    <property type="evidence" value="ECO:0007669"/>
    <property type="project" value="UniProtKB-UniRule"/>
</dbReference>
<dbReference type="GO" id="GO:0016887">
    <property type="term" value="F:ATP hydrolysis activity"/>
    <property type="evidence" value="ECO:0007669"/>
    <property type="project" value="InterPro"/>
</dbReference>
<dbReference type="GO" id="GO:0046933">
    <property type="term" value="F:proton-transporting ATP synthase activity, rotational mechanism"/>
    <property type="evidence" value="ECO:0007669"/>
    <property type="project" value="UniProtKB-UniRule"/>
</dbReference>
<dbReference type="CDD" id="cd18110">
    <property type="entry name" value="ATP-synt_F1_beta_C"/>
    <property type="match status" value="1"/>
</dbReference>
<dbReference type="CDD" id="cd18115">
    <property type="entry name" value="ATP-synt_F1_beta_N"/>
    <property type="match status" value="1"/>
</dbReference>
<dbReference type="CDD" id="cd01133">
    <property type="entry name" value="F1-ATPase_beta_CD"/>
    <property type="match status" value="1"/>
</dbReference>
<dbReference type="FunFam" id="1.10.1140.10:FF:000001">
    <property type="entry name" value="ATP synthase subunit beta"/>
    <property type="match status" value="1"/>
</dbReference>
<dbReference type="FunFam" id="2.40.10.170:FF:000005">
    <property type="entry name" value="ATP synthase subunit beta"/>
    <property type="match status" value="1"/>
</dbReference>
<dbReference type="FunFam" id="3.40.50.300:FF:000004">
    <property type="entry name" value="ATP synthase subunit beta"/>
    <property type="match status" value="1"/>
</dbReference>
<dbReference type="Gene3D" id="2.40.10.170">
    <property type="match status" value="1"/>
</dbReference>
<dbReference type="Gene3D" id="1.10.1140.10">
    <property type="entry name" value="Bovine Mitochondrial F1-atpase, Atp Synthase Beta Chain, Chain D, domain 3"/>
    <property type="match status" value="1"/>
</dbReference>
<dbReference type="Gene3D" id="3.40.50.300">
    <property type="entry name" value="P-loop containing nucleotide triphosphate hydrolases"/>
    <property type="match status" value="1"/>
</dbReference>
<dbReference type="HAMAP" id="MF_01347">
    <property type="entry name" value="ATP_synth_beta_bact"/>
    <property type="match status" value="1"/>
</dbReference>
<dbReference type="InterPro" id="IPR003593">
    <property type="entry name" value="AAA+_ATPase"/>
</dbReference>
<dbReference type="InterPro" id="IPR055190">
    <property type="entry name" value="ATP-synt_VA_C"/>
</dbReference>
<dbReference type="InterPro" id="IPR005722">
    <property type="entry name" value="ATP_synth_F1_bsu"/>
</dbReference>
<dbReference type="InterPro" id="IPR020003">
    <property type="entry name" value="ATPase_a/bsu_AS"/>
</dbReference>
<dbReference type="InterPro" id="IPR050053">
    <property type="entry name" value="ATPase_alpha/beta_chains"/>
</dbReference>
<dbReference type="InterPro" id="IPR004100">
    <property type="entry name" value="ATPase_F1/V1/A1_a/bsu_N"/>
</dbReference>
<dbReference type="InterPro" id="IPR036121">
    <property type="entry name" value="ATPase_F1/V1/A1_a/bsu_N_sf"/>
</dbReference>
<dbReference type="InterPro" id="IPR000194">
    <property type="entry name" value="ATPase_F1/V1/A1_a/bsu_nucl-bd"/>
</dbReference>
<dbReference type="InterPro" id="IPR024034">
    <property type="entry name" value="ATPase_F1/V1_b/a_C"/>
</dbReference>
<dbReference type="InterPro" id="IPR027417">
    <property type="entry name" value="P-loop_NTPase"/>
</dbReference>
<dbReference type="NCBIfam" id="TIGR01039">
    <property type="entry name" value="atpD"/>
    <property type="match status" value="1"/>
</dbReference>
<dbReference type="PANTHER" id="PTHR15184">
    <property type="entry name" value="ATP SYNTHASE"/>
    <property type="match status" value="1"/>
</dbReference>
<dbReference type="PANTHER" id="PTHR15184:SF71">
    <property type="entry name" value="ATP SYNTHASE SUBUNIT BETA, MITOCHONDRIAL"/>
    <property type="match status" value="1"/>
</dbReference>
<dbReference type="Pfam" id="PF00006">
    <property type="entry name" value="ATP-synt_ab"/>
    <property type="match status" value="1"/>
</dbReference>
<dbReference type="Pfam" id="PF02874">
    <property type="entry name" value="ATP-synt_ab_N"/>
    <property type="match status" value="1"/>
</dbReference>
<dbReference type="Pfam" id="PF22919">
    <property type="entry name" value="ATP-synt_VA_C"/>
    <property type="match status" value="1"/>
</dbReference>
<dbReference type="SMART" id="SM00382">
    <property type="entry name" value="AAA"/>
    <property type="match status" value="1"/>
</dbReference>
<dbReference type="SUPFAM" id="SSF47917">
    <property type="entry name" value="C-terminal domain of alpha and beta subunits of F1 ATP synthase"/>
    <property type="match status" value="1"/>
</dbReference>
<dbReference type="SUPFAM" id="SSF50615">
    <property type="entry name" value="N-terminal domain of alpha and beta subunits of F1 ATP synthase"/>
    <property type="match status" value="1"/>
</dbReference>
<dbReference type="SUPFAM" id="SSF52540">
    <property type="entry name" value="P-loop containing nucleoside triphosphate hydrolases"/>
    <property type="match status" value="1"/>
</dbReference>
<dbReference type="PROSITE" id="PS00152">
    <property type="entry name" value="ATPASE_ALPHA_BETA"/>
    <property type="match status" value="1"/>
</dbReference>
<proteinExistence type="inferred from homology"/>
<sequence>MTTTAEKTDRPGKPGSSDTSGRVVRVTGPVVDVEFPRGSIPELFNALHAEITFESLAKTLTLEVAQHLGDNLVRTISLQPTDGLVRGVEVIDTGRSISVPVGEGVKGHVFNALGDCLDEPGYGEKFEHWSIHRKPPAFEELEPRTEMLETGLKVVDLLTPYVRGGKIALFGGAGVGKTVLIQEMINRIARNFGGTSVFAGVGERTREGNDLWVELAEANVLKDTALVFGQMDEPPGTRMRVALSALTMAEWFRDEQGQDVLLFIDNIFRFTQAGSEVSTLLGRMPSAVGYQPTLADEMGELQERITSTRGRSITSMQAVYVPADDYTDPAPATTFAHLDATTELSRAVFSKGIFPAVDPLASSSTILDPSVVGDEHYRVAQEVIRILQRYKDLQDIIAILGIDELSEEDKQLVNRARRIERFLSQNMMAAEQFTGQPGSTVPVKETIEAFDRLCKGDFDHVPEQAFFLIGGLDDLAKKAESLGAKL</sequence>
<organism>
    <name type="scientific">Mycobacterium bovis (strain ATCC BAA-935 / AF2122/97)</name>
    <dbReference type="NCBI Taxonomy" id="233413"/>
    <lineage>
        <taxon>Bacteria</taxon>
        <taxon>Bacillati</taxon>
        <taxon>Actinomycetota</taxon>
        <taxon>Actinomycetes</taxon>
        <taxon>Mycobacteriales</taxon>
        <taxon>Mycobacteriaceae</taxon>
        <taxon>Mycobacterium</taxon>
        <taxon>Mycobacterium tuberculosis complex</taxon>
    </lineage>
</organism>